<name>AZOR_CUPNH</name>
<sequence length="206" mass="21945">MNILQIDSSVLGDNSVSRSLTASVVADLVAATPDAKVTVRDLDQDAPAHLSGNLLPVLGGPKEGLSAIQEAELQRTEQWLAEFLAADVLVVGVPQYNFSIPSQLKAWIDRIAQAGRTFKYTENGPVGLAGGKRVIVVSSRGGVRQDANELDLHEKTVDIVFRFLGITDITYVRAHGLAMGPQFREAGLASARTEIAALNDASRLAA</sequence>
<proteinExistence type="inferred from homology"/>
<protein>
    <recommendedName>
        <fullName evidence="1">FMN-dependent NADH:quinone oxidoreductase</fullName>
        <ecNumber evidence="1">1.6.5.-</ecNumber>
    </recommendedName>
    <alternativeName>
        <fullName evidence="1">Azo-dye reductase</fullName>
    </alternativeName>
    <alternativeName>
        <fullName evidence="1">FMN-dependent NADH-azo compound oxidoreductase</fullName>
    </alternativeName>
    <alternativeName>
        <fullName evidence="1">FMN-dependent NADH-azoreductase</fullName>
        <ecNumber evidence="1">1.7.1.17</ecNumber>
    </alternativeName>
</protein>
<feature type="chain" id="PRO_1000066517" description="FMN-dependent NADH:quinone oxidoreductase">
    <location>
        <begin position="1"/>
        <end position="206"/>
    </location>
</feature>
<feature type="binding site" evidence="1">
    <location>
        <position position="9"/>
    </location>
    <ligand>
        <name>FMN</name>
        <dbReference type="ChEBI" id="CHEBI:58210"/>
    </ligand>
</feature>
<feature type="binding site" evidence="1">
    <location>
        <begin position="15"/>
        <end position="17"/>
    </location>
    <ligand>
        <name>FMN</name>
        <dbReference type="ChEBI" id="CHEBI:58210"/>
    </ligand>
</feature>
<feature type="binding site" evidence="1">
    <location>
        <begin position="139"/>
        <end position="142"/>
    </location>
    <ligand>
        <name>FMN</name>
        <dbReference type="ChEBI" id="CHEBI:58210"/>
    </ligand>
</feature>
<gene>
    <name evidence="1" type="primary">azoR</name>
    <name type="ordered locus">H16_A1577</name>
</gene>
<comment type="function">
    <text evidence="1">Quinone reductase that provides resistance to thiol-specific stress caused by electrophilic quinones.</text>
</comment>
<comment type="function">
    <text evidence="1">Also exhibits azoreductase activity. Catalyzes the reductive cleavage of the azo bond in aromatic azo compounds to the corresponding amines.</text>
</comment>
<comment type="catalytic activity">
    <reaction evidence="1">
        <text>2 a quinone + NADH + H(+) = 2 a 1,4-benzosemiquinone + NAD(+)</text>
        <dbReference type="Rhea" id="RHEA:65952"/>
        <dbReference type="ChEBI" id="CHEBI:15378"/>
        <dbReference type="ChEBI" id="CHEBI:57540"/>
        <dbReference type="ChEBI" id="CHEBI:57945"/>
        <dbReference type="ChEBI" id="CHEBI:132124"/>
        <dbReference type="ChEBI" id="CHEBI:134225"/>
    </reaction>
</comment>
<comment type="catalytic activity">
    <reaction evidence="1">
        <text>N,N-dimethyl-1,4-phenylenediamine + anthranilate + 2 NAD(+) = 2-(4-dimethylaminophenyl)diazenylbenzoate + 2 NADH + 2 H(+)</text>
        <dbReference type="Rhea" id="RHEA:55872"/>
        <dbReference type="ChEBI" id="CHEBI:15378"/>
        <dbReference type="ChEBI" id="CHEBI:15783"/>
        <dbReference type="ChEBI" id="CHEBI:16567"/>
        <dbReference type="ChEBI" id="CHEBI:57540"/>
        <dbReference type="ChEBI" id="CHEBI:57945"/>
        <dbReference type="ChEBI" id="CHEBI:71579"/>
        <dbReference type="EC" id="1.7.1.17"/>
    </reaction>
</comment>
<comment type="cofactor">
    <cofactor evidence="1">
        <name>FMN</name>
        <dbReference type="ChEBI" id="CHEBI:58210"/>
    </cofactor>
    <text evidence="1">Binds 1 FMN per subunit.</text>
</comment>
<comment type="subunit">
    <text evidence="1">Homodimer.</text>
</comment>
<comment type="similarity">
    <text evidence="1">Belongs to the azoreductase type 1 family.</text>
</comment>
<evidence type="ECO:0000255" key="1">
    <source>
        <dbReference type="HAMAP-Rule" id="MF_01216"/>
    </source>
</evidence>
<dbReference type="EC" id="1.6.5.-" evidence="1"/>
<dbReference type="EC" id="1.7.1.17" evidence="1"/>
<dbReference type="EMBL" id="AM260479">
    <property type="protein sequence ID" value="CAJ92709.1"/>
    <property type="molecule type" value="Genomic_DNA"/>
</dbReference>
<dbReference type="RefSeq" id="WP_010809995.1">
    <property type="nucleotide sequence ID" value="NZ_CP039287.1"/>
</dbReference>
<dbReference type="SMR" id="Q0KBB2"/>
<dbReference type="STRING" id="381666.H16_A1577"/>
<dbReference type="KEGG" id="reh:H16_A1577"/>
<dbReference type="eggNOG" id="COG1182">
    <property type="taxonomic scope" value="Bacteria"/>
</dbReference>
<dbReference type="HOGENOM" id="CLU_088964_0_0_4"/>
<dbReference type="OrthoDB" id="9787136at2"/>
<dbReference type="Proteomes" id="UP000008210">
    <property type="component" value="Chromosome 1"/>
</dbReference>
<dbReference type="GO" id="GO:0009055">
    <property type="term" value="F:electron transfer activity"/>
    <property type="evidence" value="ECO:0007669"/>
    <property type="project" value="UniProtKB-UniRule"/>
</dbReference>
<dbReference type="GO" id="GO:0010181">
    <property type="term" value="F:FMN binding"/>
    <property type="evidence" value="ECO:0007669"/>
    <property type="project" value="UniProtKB-UniRule"/>
</dbReference>
<dbReference type="GO" id="GO:0016652">
    <property type="term" value="F:oxidoreductase activity, acting on NAD(P)H as acceptor"/>
    <property type="evidence" value="ECO:0007669"/>
    <property type="project" value="UniProtKB-UniRule"/>
</dbReference>
<dbReference type="GO" id="GO:0016655">
    <property type="term" value="F:oxidoreductase activity, acting on NAD(P)H, quinone or similar compound as acceptor"/>
    <property type="evidence" value="ECO:0007669"/>
    <property type="project" value="InterPro"/>
</dbReference>
<dbReference type="Gene3D" id="3.40.50.360">
    <property type="match status" value="1"/>
</dbReference>
<dbReference type="HAMAP" id="MF_01216">
    <property type="entry name" value="Azoreductase_type1"/>
    <property type="match status" value="1"/>
</dbReference>
<dbReference type="InterPro" id="IPR003680">
    <property type="entry name" value="Flavodoxin_fold"/>
</dbReference>
<dbReference type="InterPro" id="IPR029039">
    <property type="entry name" value="Flavoprotein-like_sf"/>
</dbReference>
<dbReference type="InterPro" id="IPR050104">
    <property type="entry name" value="FMN-dep_NADH:Q_OxRdtase_AzoR1"/>
</dbReference>
<dbReference type="InterPro" id="IPR023048">
    <property type="entry name" value="NADH:quinone_OxRdtase_FMN_depd"/>
</dbReference>
<dbReference type="PANTHER" id="PTHR43741">
    <property type="entry name" value="FMN-DEPENDENT NADH-AZOREDUCTASE 1"/>
    <property type="match status" value="1"/>
</dbReference>
<dbReference type="PANTHER" id="PTHR43741:SF4">
    <property type="entry name" value="FMN-DEPENDENT NADH:QUINONE OXIDOREDUCTASE"/>
    <property type="match status" value="1"/>
</dbReference>
<dbReference type="Pfam" id="PF02525">
    <property type="entry name" value="Flavodoxin_2"/>
    <property type="match status" value="1"/>
</dbReference>
<dbReference type="SUPFAM" id="SSF52218">
    <property type="entry name" value="Flavoproteins"/>
    <property type="match status" value="1"/>
</dbReference>
<organism>
    <name type="scientific">Cupriavidus necator (strain ATCC 17699 / DSM 428 / KCTC 22496 / NCIMB 10442 / H16 / Stanier 337)</name>
    <name type="common">Ralstonia eutropha</name>
    <dbReference type="NCBI Taxonomy" id="381666"/>
    <lineage>
        <taxon>Bacteria</taxon>
        <taxon>Pseudomonadati</taxon>
        <taxon>Pseudomonadota</taxon>
        <taxon>Betaproteobacteria</taxon>
        <taxon>Burkholderiales</taxon>
        <taxon>Burkholderiaceae</taxon>
        <taxon>Cupriavidus</taxon>
    </lineage>
</organism>
<keyword id="KW-0285">Flavoprotein</keyword>
<keyword id="KW-0288">FMN</keyword>
<keyword id="KW-0520">NAD</keyword>
<keyword id="KW-0560">Oxidoreductase</keyword>
<keyword id="KW-1185">Reference proteome</keyword>
<reference key="1">
    <citation type="journal article" date="2006" name="Nat. Biotechnol.">
        <title>Genome sequence of the bioplastic-producing 'Knallgas' bacterium Ralstonia eutropha H16.</title>
        <authorList>
            <person name="Pohlmann A."/>
            <person name="Fricke W.F."/>
            <person name="Reinecke F."/>
            <person name="Kusian B."/>
            <person name="Liesegang H."/>
            <person name="Cramm R."/>
            <person name="Eitinger T."/>
            <person name="Ewering C."/>
            <person name="Poetter M."/>
            <person name="Schwartz E."/>
            <person name="Strittmatter A."/>
            <person name="Voss I."/>
            <person name="Gottschalk G."/>
            <person name="Steinbuechel A."/>
            <person name="Friedrich B."/>
            <person name="Bowien B."/>
        </authorList>
    </citation>
    <scope>NUCLEOTIDE SEQUENCE [LARGE SCALE GENOMIC DNA]</scope>
    <source>
        <strain>ATCC 17699 / DSM 428 / KCTC 22496 / NCIMB 10442 / H16 / Stanier 337</strain>
    </source>
</reference>
<accession>Q0KBB2</accession>